<organism>
    <name type="scientific">Dictyostelium discoideum</name>
    <name type="common">Social amoeba</name>
    <dbReference type="NCBI Taxonomy" id="44689"/>
    <lineage>
        <taxon>Eukaryota</taxon>
        <taxon>Amoebozoa</taxon>
        <taxon>Evosea</taxon>
        <taxon>Eumycetozoa</taxon>
        <taxon>Dictyostelia</taxon>
        <taxon>Dictyosteliales</taxon>
        <taxon>Dictyosteliaceae</taxon>
        <taxon>Dictyostelium</taxon>
    </lineage>
</organism>
<protein>
    <recommendedName>
        <fullName>Polyubiquitin-I</fullName>
    </recommendedName>
    <component>
        <recommendedName>
            <fullName>Ubiquitin</fullName>
        </recommendedName>
    </component>
</protein>
<name>UBIQI_DICDI</name>
<sequence>MQIFVKTLTGKTITLEVEGSDNIENVKAKIQDKEGIPPDQQRLIFAGKQLEDGRTLSDYNIQKESTLHLVLRLRGGMQIFVKTLTGKTITLEVEGSDNIENVKAKIQDKEGIPPDQQRLIFAGKQLEDGRTLSDYNIQKESTLHLVLRLRGGMQIFVKTLTGKTITLEVEGSDNIENVKAKIQDKEGIPPDQQRLIFAGKQLEDGRTLSDYNIQKESTLHLVLRLRGGMQIFVKTLTGKTITLEVEGSDNIENVKAKIQDKEGIPPDQQRLIFAGKQLEDGRTLSDYNIQKESTLHLVLRLRGGN</sequence>
<feature type="chain" id="PRO_0000396341" description="Ubiquitin">
    <location>
        <begin position="1"/>
        <end position="76"/>
    </location>
</feature>
<feature type="chain" id="PRO_0000396342" description="Ubiquitin">
    <location>
        <begin position="77"/>
        <end position="152"/>
    </location>
</feature>
<feature type="chain" id="PRO_0000396343" description="Ubiquitin">
    <location>
        <begin position="153"/>
        <end position="228"/>
    </location>
</feature>
<feature type="chain" id="PRO_0000396344" description="Ubiquitin">
    <location>
        <begin position="229"/>
        <end position="304"/>
    </location>
</feature>
<feature type="propeptide" id="PRO_0000396345">
    <location>
        <position position="305"/>
    </location>
</feature>
<feature type="domain" description="Ubiquitin-like 1" evidence="2">
    <location>
        <begin position="1"/>
        <end position="76"/>
    </location>
</feature>
<feature type="domain" description="Ubiquitin-like 2" evidence="2">
    <location>
        <begin position="77"/>
        <end position="152"/>
    </location>
</feature>
<feature type="domain" description="Ubiquitin-like 3" evidence="2">
    <location>
        <begin position="153"/>
        <end position="228"/>
    </location>
</feature>
<feature type="domain" description="Ubiquitin-like 4" evidence="2">
    <location>
        <begin position="229"/>
        <end position="304"/>
    </location>
</feature>
<feature type="cross-link" description="Glycyl lysine isopeptide (Lys-Gly) (interchain with G-Cter in ubiquitin)" evidence="1">
    <location>
        <position position="48"/>
    </location>
</feature>
<feature type="cross-link" description="Glycyl lysine isopeptide (Gly-Lys) (interchain with K-? in acceptor proteins)" evidence="2">
    <location>
        <position position="76"/>
    </location>
</feature>
<evidence type="ECO:0000250" key="1"/>
<evidence type="ECO:0000255" key="2">
    <source>
        <dbReference type="PROSITE-ProRule" id="PRU00214"/>
    </source>
</evidence>
<evidence type="ECO:0000305" key="3"/>
<keyword id="KW-0963">Cytoplasm</keyword>
<keyword id="KW-1017">Isopeptide bond</keyword>
<keyword id="KW-0539">Nucleus</keyword>
<keyword id="KW-1185">Reference proteome</keyword>
<keyword id="KW-0677">Repeat</keyword>
<keyword id="KW-0832">Ubl conjugation</keyword>
<accession>P0CG80</accession>
<accession>P08618</accession>
<accession>Q54HH5</accession>
<accession>Q54L38</accession>
<accession>Q54SE1</accession>
<accession>Q54SP3</accession>
<accession>Q54UW7</accession>
<accession>Q54WJ3</accession>
<accession>Q550W7</accession>
<accession>Q55DZ5</accession>
<accession>Q86KQ4</accession>
<gene>
    <name type="primary">ubqI</name>
    <name type="ORF">DDB_G0291928</name>
</gene>
<dbReference type="EMBL" id="AAFI02000186">
    <property type="protein sequence ID" value="EAL61494.1"/>
    <property type="molecule type" value="Genomic_DNA"/>
</dbReference>
<dbReference type="RefSeq" id="XP_629924.1">
    <property type="nucleotide sequence ID" value="XM_629922.1"/>
</dbReference>
<dbReference type="SMR" id="P0CG80"/>
<dbReference type="FunCoup" id="P0CG80">
    <property type="interactions" value="158"/>
</dbReference>
<dbReference type="STRING" id="44689.P0CG80"/>
<dbReference type="EnsemblProtists" id="EAL61494">
    <property type="protein sequence ID" value="EAL61494"/>
    <property type="gene ID" value="DDB_G0291928"/>
</dbReference>
<dbReference type="GeneID" id="8628425"/>
<dbReference type="KEGG" id="ddi:DDB_G0269458"/>
<dbReference type="KEGG" id="ddi:DDB_G0291928"/>
<dbReference type="dictyBase" id="DDB_G0291928">
    <property type="gene designation" value="ubqI"/>
</dbReference>
<dbReference type="VEuPathDB" id="AmoebaDB:DDB_G0291928"/>
<dbReference type="eggNOG" id="KOG0001">
    <property type="taxonomic scope" value="Eukaryota"/>
</dbReference>
<dbReference type="HOGENOM" id="CLU_010412_7_0_1"/>
<dbReference type="InParanoid" id="P0CG80"/>
<dbReference type="PhylomeDB" id="P0CG80"/>
<dbReference type="Reactome" id="R-DDI-110314">
    <property type="pathway name" value="Recognition of DNA damage by PCNA-containing replication complex"/>
</dbReference>
<dbReference type="Reactome" id="R-DDI-1169408">
    <property type="pathway name" value="ISG15 antiviral mechanism"/>
</dbReference>
<dbReference type="Reactome" id="R-DDI-1358803">
    <property type="pathway name" value="Downregulation of ERBB2:ERBB3 signaling"/>
</dbReference>
<dbReference type="Reactome" id="R-DDI-174048">
    <property type="pathway name" value="APC/C:Cdc20 mediated degradation of Cyclin B"/>
</dbReference>
<dbReference type="Reactome" id="R-DDI-174084">
    <property type="pathway name" value="Autodegradation of Cdh1 by Cdh1:APC/C"/>
</dbReference>
<dbReference type="Reactome" id="R-DDI-174154">
    <property type="pathway name" value="APC/C:Cdc20 mediated degradation of Securin"/>
</dbReference>
<dbReference type="Reactome" id="R-DDI-174178">
    <property type="pathway name" value="APC/C:Cdh1 mediated degradation of Cdc20 and other APC/C:Cdh1 targeted proteins in late mitosis/early G1"/>
</dbReference>
<dbReference type="Reactome" id="R-DDI-174184">
    <property type="pathway name" value="Cdc20:Phospho-APC/C mediated degradation of Cyclin A"/>
</dbReference>
<dbReference type="Reactome" id="R-DDI-179409">
    <property type="pathway name" value="APC-Cdc20 mediated degradation of Nek2A"/>
</dbReference>
<dbReference type="Reactome" id="R-DDI-2467813">
    <property type="pathway name" value="Separation of Sister Chromatids"/>
</dbReference>
<dbReference type="Reactome" id="R-DDI-2559582">
    <property type="pathway name" value="Senescence-Associated Secretory Phenotype (SASP)"/>
</dbReference>
<dbReference type="Reactome" id="R-DDI-349425">
    <property type="pathway name" value="Autodegradation of the E3 ubiquitin ligase COP1"/>
</dbReference>
<dbReference type="Reactome" id="R-DDI-382556">
    <property type="pathway name" value="ABC-family proteins mediated transport"/>
</dbReference>
<dbReference type="Reactome" id="R-DDI-450408">
    <property type="pathway name" value="AUF1 (hnRNP D0) binds and destabilizes mRNA"/>
</dbReference>
<dbReference type="Reactome" id="R-DDI-4641258">
    <property type="pathway name" value="Degradation of DVL"/>
</dbReference>
<dbReference type="Reactome" id="R-DDI-532668">
    <property type="pathway name" value="N-glycan trimming in the ER and Calnexin/Calreticulin cycle"/>
</dbReference>
<dbReference type="Reactome" id="R-DDI-5358346">
    <property type="pathway name" value="Hedgehog ligand biogenesis"/>
</dbReference>
<dbReference type="Reactome" id="R-DDI-5632684">
    <property type="pathway name" value="Hedgehog 'on' state"/>
</dbReference>
<dbReference type="Reactome" id="R-DDI-5655862">
    <property type="pathway name" value="Translesion synthesis by POLK"/>
</dbReference>
<dbReference type="Reactome" id="R-DDI-5658442">
    <property type="pathway name" value="Regulation of RAS by GAPs"/>
</dbReference>
<dbReference type="Reactome" id="R-DDI-5675482">
    <property type="pathway name" value="Regulation of necroptotic cell death"/>
</dbReference>
<dbReference type="Reactome" id="R-DDI-5687128">
    <property type="pathway name" value="MAPK6/MAPK4 signaling"/>
</dbReference>
<dbReference type="Reactome" id="R-DDI-5689603">
    <property type="pathway name" value="UCH proteinases"/>
</dbReference>
<dbReference type="Reactome" id="R-DDI-5689877">
    <property type="pathway name" value="Josephin domain DUBs"/>
</dbReference>
<dbReference type="Reactome" id="R-DDI-5689880">
    <property type="pathway name" value="Ub-specific processing proteases"/>
</dbReference>
<dbReference type="Reactome" id="R-DDI-5689901">
    <property type="pathway name" value="Metalloprotease DUBs"/>
</dbReference>
<dbReference type="Reactome" id="R-DDI-5696394">
    <property type="pathway name" value="DNA Damage Recognition in GG-NER"/>
</dbReference>
<dbReference type="Reactome" id="R-DDI-5696395">
    <property type="pathway name" value="Formation of Incision Complex in GG-NER"/>
</dbReference>
<dbReference type="Reactome" id="R-DDI-5696397">
    <property type="pathway name" value="Gap-filling DNA repair synthesis and ligation in GG-NER"/>
</dbReference>
<dbReference type="Reactome" id="R-DDI-6781823">
    <property type="pathway name" value="Formation of TC-NER Pre-Incision Complex"/>
</dbReference>
<dbReference type="Reactome" id="R-DDI-6782135">
    <property type="pathway name" value="Dual incision in TC-NER"/>
</dbReference>
<dbReference type="Reactome" id="R-DDI-6782210">
    <property type="pathway name" value="Gap-filling DNA repair synthesis and ligation in TC-NER"/>
</dbReference>
<dbReference type="Reactome" id="R-DDI-68949">
    <property type="pathway name" value="Orc1 removal from chromatin"/>
</dbReference>
<dbReference type="Reactome" id="R-DDI-69017">
    <property type="pathway name" value="CDK-mediated phosphorylation and removal of Cdc6"/>
</dbReference>
<dbReference type="Reactome" id="R-DDI-69231">
    <property type="pathway name" value="Cyclin D associated events in G1"/>
</dbReference>
<dbReference type="Reactome" id="R-DDI-69601">
    <property type="pathway name" value="Ubiquitin Mediated Degradation of Phosphorylated Cdc25A"/>
</dbReference>
<dbReference type="Reactome" id="R-DDI-8854050">
    <property type="pathway name" value="FBXL7 down-regulates AURKA during mitotic entry and in early mitosis"/>
</dbReference>
<dbReference type="Reactome" id="R-DDI-8866652">
    <property type="pathway name" value="Synthesis of active ubiquitin: roles of E1 and E2 enzymes"/>
</dbReference>
<dbReference type="Reactome" id="R-DDI-8866654">
    <property type="pathway name" value="E3 ubiquitin ligases ubiquitinate target proteins"/>
</dbReference>
<dbReference type="Reactome" id="R-DDI-8948747">
    <property type="pathway name" value="Regulation of PTEN localization"/>
</dbReference>
<dbReference type="Reactome" id="R-DDI-8948751">
    <property type="pathway name" value="Regulation of PTEN stability and activity"/>
</dbReference>
<dbReference type="Reactome" id="R-DDI-8951664">
    <property type="pathway name" value="Neddylation"/>
</dbReference>
<dbReference type="Reactome" id="R-DDI-901032">
    <property type="pathway name" value="ER Quality Control Compartment (ERQC)"/>
</dbReference>
<dbReference type="Reactome" id="R-DDI-9020702">
    <property type="pathway name" value="Interleukin-1 signaling"/>
</dbReference>
<dbReference type="Reactome" id="R-DDI-9033241">
    <property type="pathway name" value="Peroxisomal protein import"/>
</dbReference>
<dbReference type="Reactome" id="R-DDI-917729">
    <property type="pathway name" value="Endosomal Sorting Complex Required For Transport (ESCRT)"/>
</dbReference>
<dbReference type="Reactome" id="R-DDI-917937">
    <property type="pathway name" value="Iron uptake and transport"/>
</dbReference>
<dbReference type="Reactome" id="R-DDI-936440">
    <property type="pathway name" value="Negative regulators of DDX58/IFIH1 signaling"/>
</dbReference>
<dbReference type="Reactome" id="R-DDI-9646399">
    <property type="pathway name" value="Aggrephagy"/>
</dbReference>
<dbReference type="Reactome" id="R-DDI-9664873">
    <property type="pathway name" value="Pexophagy"/>
</dbReference>
<dbReference type="Reactome" id="R-DDI-9755511">
    <property type="pathway name" value="KEAP1-NFE2L2 pathway"/>
</dbReference>
<dbReference type="Reactome" id="R-DDI-9758274">
    <property type="pathway name" value="Regulation of NF-kappa B signaling"/>
</dbReference>
<dbReference type="Reactome" id="R-DDI-983168">
    <property type="pathway name" value="Antigen processing: Ubiquitination &amp; Proteasome degradation"/>
</dbReference>
<dbReference type="Reactome" id="R-DDI-9861718">
    <property type="pathway name" value="Regulation of pyruvate metabolism"/>
</dbReference>
<dbReference type="Reactome" id="R-DDI-9909505">
    <property type="pathway name" value="Modulation of host responses by IFN-stimulated genes"/>
</dbReference>
<dbReference type="PRO" id="PR:P0CG80"/>
<dbReference type="Proteomes" id="UP000002195">
    <property type="component" value="Chromosome 6"/>
</dbReference>
<dbReference type="GO" id="GO:0005737">
    <property type="term" value="C:cytoplasm"/>
    <property type="evidence" value="ECO:0000318"/>
    <property type="project" value="GO_Central"/>
</dbReference>
<dbReference type="GO" id="GO:0005634">
    <property type="term" value="C:nucleus"/>
    <property type="evidence" value="ECO:0000318"/>
    <property type="project" value="GO_Central"/>
</dbReference>
<dbReference type="GO" id="GO:0031386">
    <property type="term" value="F:protein tag activity"/>
    <property type="evidence" value="ECO:0000318"/>
    <property type="project" value="GO_Central"/>
</dbReference>
<dbReference type="GO" id="GO:0031625">
    <property type="term" value="F:ubiquitin protein ligase binding"/>
    <property type="evidence" value="ECO:0000318"/>
    <property type="project" value="GO_Central"/>
</dbReference>
<dbReference type="GO" id="GO:0019941">
    <property type="term" value="P:modification-dependent protein catabolic process"/>
    <property type="evidence" value="ECO:0000318"/>
    <property type="project" value="GO_Central"/>
</dbReference>
<dbReference type="GO" id="GO:0016567">
    <property type="term" value="P:protein ubiquitination"/>
    <property type="evidence" value="ECO:0000318"/>
    <property type="project" value="GO_Central"/>
</dbReference>
<dbReference type="CDD" id="cd01803">
    <property type="entry name" value="Ubl_ubiquitin"/>
    <property type="match status" value="4"/>
</dbReference>
<dbReference type="FunFam" id="3.10.20.90:FF:000158">
    <property type="entry name" value="Polyubiquitin 5"/>
    <property type="match status" value="2"/>
</dbReference>
<dbReference type="FunFam" id="3.10.20.90:FF:000014">
    <property type="entry name" value="Ubiquitin-60S ribosomal L40 fusion"/>
    <property type="match status" value="2"/>
</dbReference>
<dbReference type="Gene3D" id="3.10.20.90">
    <property type="entry name" value="Phosphatidylinositol 3-kinase Catalytic Subunit, Chain A, domain 1"/>
    <property type="match status" value="4"/>
</dbReference>
<dbReference type="InterPro" id="IPR000626">
    <property type="entry name" value="Ubiquitin-like_dom"/>
</dbReference>
<dbReference type="InterPro" id="IPR029071">
    <property type="entry name" value="Ubiquitin-like_domsf"/>
</dbReference>
<dbReference type="InterPro" id="IPR019954">
    <property type="entry name" value="Ubiquitin_CS"/>
</dbReference>
<dbReference type="InterPro" id="IPR019956">
    <property type="entry name" value="Ubiquitin_dom"/>
</dbReference>
<dbReference type="InterPro" id="IPR050158">
    <property type="entry name" value="Ubiquitin_ubiquitin-like"/>
</dbReference>
<dbReference type="PANTHER" id="PTHR10666">
    <property type="entry name" value="UBIQUITIN"/>
    <property type="match status" value="1"/>
</dbReference>
<dbReference type="Pfam" id="PF00240">
    <property type="entry name" value="ubiquitin"/>
    <property type="match status" value="4"/>
</dbReference>
<dbReference type="PRINTS" id="PR00348">
    <property type="entry name" value="UBIQUITIN"/>
</dbReference>
<dbReference type="SMART" id="SM00213">
    <property type="entry name" value="UBQ"/>
    <property type="match status" value="4"/>
</dbReference>
<dbReference type="SUPFAM" id="SSF54236">
    <property type="entry name" value="Ubiquitin-like"/>
    <property type="match status" value="4"/>
</dbReference>
<dbReference type="PROSITE" id="PS00299">
    <property type="entry name" value="UBIQUITIN_1"/>
    <property type="match status" value="4"/>
</dbReference>
<dbReference type="PROSITE" id="PS50053">
    <property type="entry name" value="UBIQUITIN_2"/>
    <property type="match status" value="4"/>
</dbReference>
<reference key="1">
    <citation type="journal article" date="2005" name="Nature">
        <title>The genome of the social amoeba Dictyostelium discoideum.</title>
        <authorList>
            <person name="Eichinger L."/>
            <person name="Pachebat J.A."/>
            <person name="Gloeckner G."/>
            <person name="Rajandream M.A."/>
            <person name="Sucgang R."/>
            <person name="Berriman M."/>
            <person name="Song J."/>
            <person name="Olsen R."/>
            <person name="Szafranski K."/>
            <person name="Xu Q."/>
            <person name="Tunggal B."/>
            <person name="Kummerfeld S."/>
            <person name="Madera M."/>
            <person name="Konfortov B.A."/>
            <person name="Rivero F."/>
            <person name="Bankier A.T."/>
            <person name="Lehmann R."/>
            <person name="Hamlin N."/>
            <person name="Davies R."/>
            <person name="Gaudet P."/>
            <person name="Fey P."/>
            <person name="Pilcher K."/>
            <person name="Chen G."/>
            <person name="Saunders D."/>
            <person name="Sodergren E.J."/>
            <person name="Davis P."/>
            <person name="Kerhornou A."/>
            <person name="Nie X."/>
            <person name="Hall N."/>
            <person name="Anjard C."/>
            <person name="Hemphill L."/>
            <person name="Bason N."/>
            <person name="Farbrother P."/>
            <person name="Desany B."/>
            <person name="Just E."/>
            <person name="Morio T."/>
            <person name="Rost R."/>
            <person name="Churcher C.M."/>
            <person name="Cooper J."/>
            <person name="Haydock S."/>
            <person name="van Driessche N."/>
            <person name="Cronin A."/>
            <person name="Goodhead I."/>
            <person name="Muzny D.M."/>
            <person name="Mourier T."/>
            <person name="Pain A."/>
            <person name="Lu M."/>
            <person name="Harper D."/>
            <person name="Lindsay R."/>
            <person name="Hauser H."/>
            <person name="James K.D."/>
            <person name="Quiles M."/>
            <person name="Madan Babu M."/>
            <person name="Saito T."/>
            <person name="Buchrieser C."/>
            <person name="Wardroper A."/>
            <person name="Felder M."/>
            <person name="Thangavelu M."/>
            <person name="Johnson D."/>
            <person name="Knights A."/>
            <person name="Loulseged H."/>
            <person name="Mungall K.L."/>
            <person name="Oliver K."/>
            <person name="Price C."/>
            <person name="Quail M.A."/>
            <person name="Urushihara H."/>
            <person name="Hernandez J."/>
            <person name="Rabbinowitsch E."/>
            <person name="Steffen D."/>
            <person name="Sanders M."/>
            <person name="Ma J."/>
            <person name="Kohara Y."/>
            <person name="Sharp S."/>
            <person name="Simmonds M.N."/>
            <person name="Spiegler S."/>
            <person name="Tivey A."/>
            <person name="Sugano S."/>
            <person name="White B."/>
            <person name="Walker D."/>
            <person name="Woodward J.R."/>
            <person name="Winckler T."/>
            <person name="Tanaka Y."/>
            <person name="Shaulsky G."/>
            <person name="Schleicher M."/>
            <person name="Weinstock G.M."/>
            <person name="Rosenthal A."/>
            <person name="Cox E.C."/>
            <person name="Chisholm R.L."/>
            <person name="Gibbs R.A."/>
            <person name="Loomis W.F."/>
            <person name="Platzer M."/>
            <person name="Kay R.R."/>
            <person name="Williams J.G."/>
            <person name="Dear P.H."/>
            <person name="Noegel A.A."/>
            <person name="Barrell B.G."/>
            <person name="Kuspa A."/>
        </authorList>
    </citation>
    <scope>NUCLEOTIDE SEQUENCE [LARGE SCALE GENOMIC DNA]</scope>
    <source>
        <strain>AX4</strain>
    </source>
</reference>
<reference key="2">
    <citation type="journal article" date="2006" name="J. Proteome Res.">
        <title>Identification of novel centrosomal proteins in Dictyostelium discoideum by comparative proteomic approaches.</title>
        <authorList>
            <person name="Reinders Y."/>
            <person name="Schulz I."/>
            <person name="Graef R."/>
            <person name="Sickmann A."/>
        </authorList>
    </citation>
    <scope>IDENTIFICATION BY MASS SPECTROMETRY [LARGE SCALE ANALYSIS]</scope>
</reference>
<proteinExistence type="evidence at protein level"/>
<comment type="function">
    <text evidence="1">Ubiquitin exists either covalently attached to another protein, or free (unanchored). When covalently bound, it is conjugated to target proteins via an isopeptide bond either as a monomer (monoubiquitin), a polymer linked via different Lys residues of the ubiquitin (polyubiquitin chains) or a linear polymer linked via the initiator Met of the ubiquitin (linear polyubiquitin chains). Polyubiquitin chains, when attached to a target protein, have different functions depending on the Lys residue of the ubiquitin that is linked: Lys-48-linked is involved in protein degradation via the proteasome. Linear polymer chains formed via attachment by the initiator Met lead to cell signaling. Ubiquitin is usually conjugated to Lys residues of target proteins, however, in rare cases, conjugation to Cys or Ser residues has been observed. When polyubiquitin is free (unanchored-polyubiquitin), it also has distinct roles, such as in activation of protein kinases, and in signaling (By similarity).</text>
</comment>
<comment type="subcellular location">
    <subcellularLocation>
        <location evidence="1">Cytoplasm</location>
    </subcellularLocation>
    <subcellularLocation>
        <location evidence="1">Nucleus</location>
    </subcellularLocation>
</comment>
<comment type="miscellaneous">
    <text>Ubiquitin is synthesized as a polyubiquitin precursor with exact head to tail repeats. Some ubiquitin genes contain a single copy of ubiquitin fused to a ribosomal protein. In D.discoideum there are 9 genes: ubqA: 5 copies of Ub and a final Asn; ubqB: 1 copy of Ub and ribosomal protein eL40; ubqC: 1 copy of Ub and ribosomal protein eS31; ubqD: 3 copies of Ub and a final Leu; ubqF: 7 copies of Ub and a final Asn; ubqG: 5 copies of Ub and a final Leu; ubqH: 5 copies of Ub and a final Asn; ubqI: 4 copies of Ub and a final Asn; ubqJ: 4 copies of Ub and a final Asn.</text>
</comment>
<comment type="miscellaneous">
    <text>For the sake of clarity sequence features are annotated only for the first chain, and are not repeated for each of the following chains.</text>
</comment>
<comment type="similarity">
    <text evidence="3">Belongs to the ubiquitin family.</text>
</comment>